<name>UNG_CORGL</name>
<dbReference type="EC" id="3.2.2.27"/>
<dbReference type="EMBL" id="BA000036">
    <property type="protein sequence ID" value="BAB98717.1"/>
    <property type="molecule type" value="Genomic_DNA"/>
</dbReference>
<dbReference type="EMBL" id="BX927151">
    <property type="protein sequence ID" value="CAF20022.1"/>
    <property type="status" value="ALT_INIT"/>
    <property type="molecule type" value="Genomic_DNA"/>
</dbReference>
<dbReference type="RefSeq" id="NP_600544.1">
    <property type="nucleotide sequence ID" value="NC_003450.3"/>
</dbReference>
<dbReference type="SMR" id="Q8NQU9"/>
<dbReference type="STRING" id="196627.cg1496"/>
<dbReference type="KEGG" id="cgb:cg1496"/>
<dbReference type="KEGG" id="cgl:Cgl1324"/>
<dbReference type="PATRIC" id="fig|196627.13.peg.1294"/>
<dbReference type="eggNOG" id="COG0692">
    <property type="taxonomic scope" value="Bacteria"/>
</dbReference>
<dbReference type="HOGENOM" id="CLU_032162_3_1_11"/>
<dbReference type="OrthoDB" id="9804372at2"/>
<dbReference type="BioCyc" id="CORYNE:G18NG-10902-MONOMER"/>
<dbReference type="Proteomes" id="UP000000582">
    <property type="component" value="Chromosome"/>
</dbReference>
<dbReference type="Proteomes" id="UP000001009">
    <property type="component" value="Chromosome"/>
</dbReference>
<dbReference type="GO" id="GO:0005737">
    <property type="term" value="C:cytoplasm"/>
    <property type="evidence" value="ECO:0007669"/>
    <property type="project" value="UniProtKB-SubCell"/>
</dbReference>
<dbReference type="GO" id="GO:0004844">
    <property type="term" value="F:uracil DNA N-glycosylase activity"/>
    <property type="evidence" value="ECO:0007669"/>
    <property type="project" value="UniProtKB-UniRule"/>
</dbReference>
<dbReference type="GO" id="GO:0097510">
    <property type="term" value="P:base-excision repair, AP site formation via deaminated base removal"/>
    <property type="evidence" value="ECO:0007669"/>
    <property type="project" value="TreeGrafter"/>
</dbReference>
<dbReference type="CDD" id="cd10027">
    <property type="entry name" value="UDG-F1-like"/>
    <property type="match status" value="1"/>
</dbReference>
<dbReference type="Gene3D" id="3.40.470.10">
    <property type="entry name" value="Uracil-DNA glycosylase-like domain"/>
    <property type="match status" value="1"/>
</dbReference>
<dbReference type="HAMAP" id="MF_00148">
    <property type="entry name" value="UDG"/>
    <property type="match status" value="1"/>
</dbReference>
<dbReference type="InterPro" id="IPR002043">
    <property type="entry name" value="UDG_fam1"/>
</dbReference>
<dbReference type="InterPro" id="IPR018085">
    <property type="entry name" value="Ura-DNA_Glyclase_AS"/>
</dbReference>
<dbReference type="InterPro" id="IPR005122">
    <property type="entry name" value="Uracil-DNA_glycosylase-like"/>
</dbReference>
<dbReference type="InterPro" id="IPR036895">
    <property type="entry name" value="Uracil-DNA_glycosylase-like_sf"/>
</dbReference>
<dbReference type="NCBIfam" id="NF003588">
    <property type="entry name" value="PRK05254.1-1"/>
    <property type="match status" value="1"/>
</dbReference>
<dbReference type="PANTHER" id="PTHR11264">
    <property type="entry name" value="URACIL-DNA GLYCOSYLASE"/>
    <property type="match status" value="1"/>
</dbReference>
<dbReference type="PANTHER" id="PTHR11264:SF0">
    <property type="entry name" value="URACIL-DNA GLYCOSYLASE"/>
    <property type="match status" value="1"/>
</dbReference>
<dbReference type="Pfam" id="PF03167">
    <property type="entry name" value="UDG"/>
    <property type="match status" value="1"/>
</dbReference>
<dbReference type="SMART" id="SM00986">
    <property type="entry name" value="UDG"/>
    <property type="match status" value="1"/>
</dbReference>
<dbReference type="SMART" id="SM00987">
    <property type="entry name" value="UreE_C"/>
    <property type="match status" value="1"/>
</dbReference>
<dbReference type="SUPFAM" id="SSF52141">
    <property type="entry name" value="Uracil-DNA glycosylase-like"/>
    <property type="match status" value="1"/>
</dbReference>
<dbReference type="PROSITE" id="PS00130">
    <property type="entry name" value="U_DNA_GLYCOSYLASE"/>
    <property type="match status" value="1"/>
</dbReference>
<comment type="function">
    <text evidence="1">Excises uracil residues from the DNA which can arise as a result of misincorporation of dUMP residues by DNA polymerase or due to deamination of cytosine.</text>
</comment>
<comment type="catalytic activity">
    <reaction>
        <text>Hydrolyzes single-stranded DNA or mismatched double-stranded DNA and polynucleotides, releasing free uracil.</text>
        <dbReference type="EC" id="3.2.2.27"/>
    </reaction>
</comment>
<comment type="subcellular location">
    <subcellularLocation>
        <location evidence="1">Cytoplasm</location>
    </subcellularLocation>
</comment>
<comment type="similarity">
    <text evidence="2">Belongs to the uracil-DNA glycosylase (UDG) superfamily. UNG family.</text>
</comment>
<comment type="sequence caution" evidence="2">
    <conflict type="erroneous initiation">
        <sequence resource="EMBL-CDS" id="CAF20022"/>
    </conflict>
</comment>
<gene>
    <name type="primary">ung</name>
    <name type="ordered locus">Cgl1324</name>
    <name type="ordered locus">cg1496</name>
</gene>
<sequence>MEKLLMTNTLWNSVDELPIHDSWKPVLKPVEDAIRKLGVFLAEEEFLPPVDDVFRAFSYPFDAVKVLIMGQDPYPTPGHAMGLSFSTQPDVRPLPRSLNNIFKELVSDVGSLGDSASEQGALDLGINAPGSVAGTQVALPADGDLRAWSNQGVALFNRVLTVHPGQAGSHKGKGWEAVTEQAIKALAERDQPLVAILWGKQAQEVQKFLGDTPCICSVHPSPLSASRGFFGSKPFSRANEILSSLGATEIDWSL</sequence>
<keyword id="KW-0963">Cytoplasm</keyword>
<keyword id="KW-0227">DNA damage</keyword>
<keyword id="KW-0234">DNA repair</keyword>
<keyword id="KW-0378">Hydrolase</keyword>
<keyword id="KW-1185">Reference proteome</keyword>
<proteinExistence type="inferred from homology"/>
<evidence type="ECO:0000250" key="1"/>
<evidence type="ECO:0000305" key="2"/>
<reference key="1">
    <citation type="journal article" date="2003" name="Appl. Microbiol. Biotechnol.">
        <title>The Corynebacterium glutamicum genome: features and impacts on biotechnological processes.</title>
        <authorList>
            <person name="Ikeda M."/>
            <person name="Nakagawa S."/>
        </authorList>
    </citation>
    <scope>NUCLEOTIDE SEQUENCE [LARGE SCALE GENOMIC DNA]</scope>
    <source>
        <strain>ATCC 13032 / DSM 20300 / JCM 1318 / BCRC 11384 / CCUG 27702 / LMG 3730 / NBRC 12168 / NCIMB 10025 / NRRL B-2784 / 534</strain>
    </source>
</reference>
<reference key="2">
    <citation type="journal article" date="2003" name="J. Biotechnol.">
        <title>The complete Corynebacterium glutamicum ATCC 13032 genome sequence and its impact on the production of L-aspartate-derived amino acids and vitamins.</title>
        <authorList>
            <person name="Kalinowski J."/>
            <person name="Bathe B."/>
            <person name="Bartels D."/>
            <person name="Bischoff N."/>
            <person name="Bott M."/>
            <person name="Burkovski A."/>
            <person name="Dusch N."/>
            <person name="Eggeling L."/>
            <person name="Eikmanns B.J."/>
            <person name="Gaigalat L."/>
            <person name="Goesmann A."/>
            <person name="Hartmann M."/>
            <person name="Huthmacher K."/>
            <person name="Kraemer R."/>
            <person name="Linke B."/>
            <person name="McHardy A.C."/>
            <person name="Meyer F."/>
            <person name="Moeckel B."/>
            <person name="Pfefferle W."/>
            <person name="Puehler A."/>
            <person name="Rey D.A."/>
            <person name="Rueckert C."/>
            <person name="Rupp O."/>
            <person name="Sahm H."/>
            <person name="Wendisch V.F."/>
            <person name="Wiegraebe I."/>
            <person name="Tauch A."/>
        </authorList>
    </citation>
    <scope>NUCLEOTIDE SEQUENCE [LARGE SCALE GENOMIC DNA]</scope>
    <source>
        <strain>ATCC 13032 / DSM 20300 / JCM 1318 / BCRC 11384 / CCUG 27702 / LMG 3730 / NBRC 12168 / NCIMB 10025 / NRRL B-2784 / 534</strain>
    </source>
</reference>
<organism>
    <name type="scientific">Corynebacterium glutamicum (strain ATCC 13032 / DSM 20300 / JCM 1318 / BCRC 11384 / CCUG 27702 / LMG 3730 / NBRC 12168 / NCIMB 10025 / NRRL B-2784 / 534)</name>
    <dbReference type="NCBI Taxonomy" id="196627"/>
    <lineage>
        <taxon>Bacteria</taxon>
        <taxon>Bacillati</taxon>
        <taxon>Actinomycetota</taxon>
        <taxon>Actinomycetes</taxon>
        <taxon>Mycobacteriales</taxon>
        <taxon>Corynebacteriaceae</taxon>
        <taxon>Corynebacterium</taxon>
    </lineage>
</organism>
<feature type="chain" id="PRO_0000176088" description="Uracil-DNA glycosylase">
    <location>
        <begin position="1"/>
        <end position="254"/>
    </location>
</feature>
<feature type="region of interest" description="Insert">
    <location>
        <begin position="111"/>
        <end position="136"/>
    </location>
</feature>
<feature type="active site" description="Proton acceptor" evidence="1">
    <location>
        <position position="72"/>
    </location>
</feature>
<protein>
    <recommendedName>
        <fullName>Uracil-DNA glycosylase</fullName>
        <shortName>UDG</shortName>
        <ecNumber>3.2.2.27</ecNumber>
    </recommendedName>
</protein>
<accession>Q8NQU9</accession>